<sequence>MWYFSWLLGLPLAAAFAVLNAMWYELMDDRARKRLAADPTAELALEGNKHH</sequence>
<keyword id="KW-0997">Cell inner membrane</keyword>
<keyword id="KW-1003">Cell membrane</keyword>
<keyword id="KW-0249">Electron transport</keyword>
<keyword id="KW-0472">Membrane</keyword>
<keyword id="KW-1185">Reference proteome</keyword>
<keyword id="KW-1278">Translocase</keyword>
<keyword id="KW-0812">Transmembrane</keyword>
<keyword id="KW-1133">Transmembrane helix</keyword>
<keyword id="KW-0813">Transport</keyword>
<keyword id="KW-0843">Virulence</keyword>
<protein>
    <recommendedName>
        <fullName>Cytochrome bd ubiquinol oxidase subunit X</fullName>
        <ecNumber>7.1.1.7</ecNumber>
    </recommendedName>
</protein>
<organism>
    <name type="scientific">Brucella abortus (strain 2308)</name>
    <dbReference type="NCBI Taxonomy" id="359391"/>
    <lineage>
        <taxon>Bacteria</taxon>
        <taxon>Pseudomonadati</taxon>
        <taxon>Pseudomonadota</taxon>
        <taxon>Alphaproteobacteria</taxon>
        <taxon>Hyphomicrobiales</taxon>
        <taxon>Brucellaceae</taxon>
        <taxon>Brucella/Ochrobactrum group</taxon>
        <taxon>Brucella</taxon>
    </lineage>
</organism>
<reference key="1">
    <citation type="journal article" date="2005" name="Infect. Immun.">
        <title>Whole-genome analyses of speciation events in pathogenic Brucellae.</title>
        <authorList>
            <person name="Chain P.S."/>
            <person name="Comerci D.J."/>
            <person name="Tolmasky M.E."/>
            <person name="Larimer F.W."/>
            <person name="Malfatti S.A."/>
            <person name="Vergez L.M."/>
            <person name="Aguero F."/>
            <person name="Land M.L."/>
            <person name="Ugalde R.A."/>
            <person name="Garcia E."/>
        </authorList>
    </citation>
    <scope>NUCLEOTIDE SEQUENCE [LARGE SCALE GENOMIC DNA]</scope>
    <source>
        <strain>2308</strain>
    </source>
</reference>
<reference key="2">
    <citation type="journal article" date="2012" name="Front. Cell. Infect. Microbiol.">
        <title>The small protein CydX is required for function of cytochrome bd oxidase in Brucella abortus.</title>
        <authorList>
            <person name="Sun Y.H."/>
            <person name="de Jong M.F."/>
            <person name="den Hartigh A.B."/>
            <person name="Roux C.M."/>
            <person name="Rolan H.G."/>
            <person name="Tsolis R.M."/>
        </authorList>
    </citation>
    <scope>FUNCTION</scope>
    <scope>SUBCELLULAR LOCATION</scope>
    <scope>TOPOLOGY</scope>
    <scope>INDUCTION</scope>
    <scope>OPERON STRUCTURE</scope>
    <scope>DISRUPTION PHENOTYPE</scope>
    <source>
        <strain>2308</strain>
    </source>
</reference>
<gene>
    <name type="primary">cydX</name>
    <name type="synonym">ybgT</name>
    <name type="ordered locus">BAB2_0726</name>
</gene>
<proteinExistence type="evidence at protein level"/>
<dbReference type="EC" id="7.1.1.7"/>
<dbReference type="EMBL" id="AM040265">
    <property type="protein sequence ID" value="CAJ12892.1"/>
    <property type="status" value="ALT_INIT"/>
    <property type="molecule type" value="Genomic_DNA"/>
</dbReference>
<dbReference type="RefSeq" id="WP_002972046.1">
    <property type="nucleotide sequence ID" value="NZ_KN046823.1"/>
</dbReference>
<dbReference type="SMR" id="Q2YKD6"/>
<dbReference type="STRING" id="359391.BAB2_0726"/>
<dbReference type="GeneID" id="97532689"/>
<dbReference type="KEGG" id="bmf:BAB2_0726"/>
<dbReference type="PATRIC" id="fig|359391.11.peg.421"/>
<dbReference type="HOGENOM" id="CLU_207013_0_0_5"/>
<dbReference type="UniPathway" id="UPA00705"/>
<dbReference type="Proteomes" id="UP000002719">
    <property type="component" value="Chromosome II"/>
</dbReference>
<dbReference type="GO" id="GO:0005886">
    <property type="term" value="C:plasma membrane"/>
    <property type="evidence" value="ECO:0007669"/>
    <property type="project" value="UniProtKB-SubCell"/>
</dbReference>
<dbReference type="GO" id="GO:0006119">
    <property type="term" value="P:oxidative phosphorylation"/>
    <property type="evidence" value="ECO:0007669"/>
    <property type="project" value="UniProtKB-UniPathway"/>
</dbReference>
<dbReference type="InterPro" id="IPR011724">
    <property type="entry name" value="Cyd_oper_YbgT"/>
</dbReference>
<dbReference type="InterPro" id="IPR012994">
    <property type="entry name" value="YbgT_YccB"/>
</dbReference>
<dbReference type="NCBIfam" id="TIGR02106">
    <property type="entry name" value="cyd_oper_ybgT"/>
    <property type="match status" value="1"/>
</dbReference>
<dbReference type="Pfam" id="PF08173">
    <property type="entry name" value="YbgT_YccB"/>
    <property type="match status" value="1"/>
</dbReference>
<comment type="function">
    <text evidence="2">Required for correct functioning of cytochrome bd oxidase.</text>
</comment>
<comment type="catalytic activity">
    <reaction>
        <text>2 a ubiquinol + O2(in) + 4 H(+)(in) = 2 a ubiquinone + 2 H2O(in) + 4 H(+)(out)</text>
        <dbReference type="Rhea" id="RHEA:40527"/>
        <dbReference type="Rhea" id="RHEA-COMP:9565"/>
        <dbReference type="Rhea" id="RHEA-COMP:9566"/>
        <dbReference type="ChEBI" id="CHEBI:15377"/>
        <dbReference type="ChEBI" id="CHEBI:15378"/>
        <dbReference type="ChEBI" id="CHEBI:15379"/>
        <dbReference type="ChEBI" id="CHEBI:16389"/>
        <dbReference type="ChEBI" id="CHEBI:17976"/>
        <dbReference type="EC" id="7.1.1.7"/>
    </reaction>
</comment>
<comment type="pathway">
    <text>Energy metabolism; oxidative phosphorylation.</text>
</comment>
<comment type="subunit">
    <text>May be a subunit of cytochrome ubiquinol oxidase.</text>
</comment>
<comment type="subcellular location">
    <subcellularLocation>
        <location evidence="4">Cell inner membrane</location>
        <topology evidence="4">Single-pass membrane protein</topology>
    </subcellularLocation>
</comment>
<comment type="induction">
    <text evidence="2">Expressed in stationary phase. Part of the cydB-cydX operon.</text>
</comment>
<comment type="disruption phenotype">
    <text evidence="2">Highly attenuated in macrophage-like line J774 and female BALB/c ByJ mouse infections. Loss of viability in stationary phase growth in culture. Increased sensitivity to H(2)O(2), acid pH, highly sensitive to the combination of NaN(3) plus NiSO(4).</text>
</comment>
<comment type="similarity">
    <text evidence="3">Belongs to the cytochrome ubiquinol oxidase subunit X family.</text>
</comment>
<comment type="sequence caution" evidence="3">
    <conflict type="erroneous initiation">
        <sequence resource="EMBL-CDS" id="CAJ12892"/>
    </conflict>
    <text>Extended N-terminus.</text>
</comment>
<accession>Q2YKD6</accession>
<feature type="chain" id="PRO_0000424362" description="Cytochrome bd ubiquinol oxidase subunit X">
    <location>
        <begin position="1"/>
        <end position="51"/>
    </location>
</feature>
<feature type="topological domain" description="Cytoplasmic" evidence="1">
    <location>
        <begin position="1"/>
        <end position="3"/>
    </location>
</feature>
<feature type="transmembrane region" description="Helical" evidence="1">
    <location>
        <begin position="4"/>
        <end position="26"/>
    </location>
</feature>
<feature type="topological domain" description="Periplasmic" evidence="4">
    <location>
        <begin position="27"/>
        <end position="51"/>
    </location>
</feature>
<name>CYDX_BRUA2</name>
<evidence type="ECO:0000255" key="1"/>
<evidence type="ECO:0000269" key="2">
    <source>
    </source>
</evidence>
<evidence type="ECO:0000305" key="3"/>
<evidence type="ECO:0000305" key="4">
    <source>
    </source>
</evidence>